<organism>
    <name type="scientific">Chroicocephalus ridibundus</name>
    <name type="common">Black-headed gull</name>
    <name type="synonym">Larus ridibundus</name>
    <dbReference type="NCBI Taxonomy" id="1192867"/>
    <lineage>
        <taxon>Eukaryota</taxon>
        <taxon>Metazoa</taxon>
        <taxon>Chordata</taxon>
        <taxon>Craniata</taxon>
        <taxon>Vertebrata</taxon>
        <taxon>Euteleostomi</taxon>
        <taxon>Archelosauria</taxon>
        <taxon>Archosauria</taxon>
        <taxon>Dinosauria</taxon>
        <taxon>Saurischia</taxon>
        <taxon>Theropoda</taxon>
        <taxon>Coelurosauria</taxon>
        <taxon>Aves</taxon>
        <taxon>Neognathae</taxon>
        <taxon>Neoaves</taxon>
        <taxon>Charadriiformes</taxon>
        <taxon>Laridae</taxon>
        <taxon>Chroicocephalus</taxon>
    </lineage>
</organism>
<name>IOVO_CHRRI</name>
<feature type="chain" id="PRO_0000073128" description="Ovomucoid">
    <location>
        <begin position="1" status="less than"/>
        <end position="54" status="greater than"/>
    </location>
</feature>
<feature type="domain" description="Kazal-like" evidence="1">
    <location>
        <begin position="4"/>
        <end position="54"/>
    </location>
</feature>
<feature type="site" description="Reactive bond 3">
    <location>
        <begin position="16"/>
        <end position="17"/>
    </location>
</feature>
<feature type="glycosylation site" description="N-linked (GlcNAc...) asparagine">
    <location>
        <position position="43"/>
    </location>
</feature>
<feature type="disulfide bond">
    <location>
        <begin position="6"/>
        <end position="36"/>
    </location>
</feature>
<feature type="disulfide bond">
    <location>
        <begin position="14"/>
        <end position="33"/>
    </location>
</feature>
<feature type="disulfide bond">
    <location>
        <begin position="22"/>
        <end position="54"/>
    </location>
</feature>
<feature type="non-terminal residue">
    <location>
        <position position="1"/>
    </location>
</feature>
<feature type="non-terminal residue">
    <location>
        <position position="54"/>
    </location>
</feature>
<evidence type="ECO:0000255" key="1">
    <source>
        <dbReference type="PROSITE-ProRule" id="PRU00798"/>
    </source>
</evidence>
<proteinExistence type="evidence at protein level"/>
<dbReference type="PIR" id="F31447">
    <property type="entry name" value="F31447"/>
</dbReference>
<dbReference type="SMR" id="P68386"/>
<dbReference type="GO" id="GO:0005576">
    <property type="term" value="C:extracellular region"/>
    <property type="evidence" value="ECO:0007669"/>
    <property type="project" value="UniProtKB-SubCell"/>
</dbReference>
<dbReference type="GO" id="GO:0004867">
    <property type="term" value="F:serine-type endopeptidase inhibitor activity"/>
    <property type="evidence" value="ECO:0007669"/>
    <property type="project" value="UniProtKB-KW"/>
</dbReference>
<dbReference type="CDD" id="cd00104">
    <property type="entry name" value="KAZAL_FS"/>
    <property type="match status" value="1"/>
</dbReference>
<dbReference type="FunFam" id="3.30.60.30:FF:000037">
    <property type="entry name" value="Ovomucoid"/>
    <property type="match status" value="1"/>
</dbReference>
<dbReference type="Gene3D" id="3.30.60.30">
    <property type="match status" value="1"/>
</dbReference>
<dbReference type="InterPro" id="IPR051597">
    <property type="entry name" value="Bifunctional_prot_inhibitor"/>
</dbReference>
<dbReference type="InterPro" id="IPR002350">
    <property type="entry name" value="Kazal_dom"/>
</dbReference>
<dbReference type="InterPro" id="IPR036058">
    <property type="entry name" value="Kazal_dom_sf"/>
</dbReference>
<dbReference type="InterPro" id="IPR001239">
    <property type="entry name" value="Prot_inh_Kazal-m"/>
</dbReference>
<dbReference type="PANTHER" id="PTHR47729:SF1">
    <property type="entry name" value="OVOMUCOID-LIKE-RELATED"/>
    <property type="match status" value="1"/>
</dbReference>
<dbReference type="PANTHER" id="PTHR47729">
    <property type="entry name" value="SERINE PEPTIDASE INHIBITOR, KAZAL TYPE 2, TANDEM DUPLICATE 1-RELATED"/>
    <property type="match status" value="1"/>
</dbReference>
<dbReference type="Pfam" id="PF00050">
    <property type="entry name" value="Kazal_1"/>
    <property type="match status" value="1"/>
</dbReference>
<dbReference type="PRINTS" id="PR00290">
    <property type="entry name" value="KAZALINHBTR"/>
</dbReference>
<dbReference type="SMART" id="SM00280">
    <property type="entry name" value="KAZAL"/>
    <property type="match status" value="1"/>
</dbReference>
<dbReference type="SUPFAM" id="SSF100895">
    <property type="entry name" value="Kazal-type serine protease inhibitors"/>
    <property type="match status" value="1"/>
</dbReference>
<dbReference type="PROSITE" id="PS00282">
    <property type="entry name" value="KAZAL_1"/>
    <property type="match status" value="1"/>
</dbReference>
<dbReference type="PROSITE" id="PS51465">
    <property type="entry name" value="KAZAL_2"/>
    <property type="match status" value="1"/>
</dbReference>
<accession>P68386</accession>
<accession>P05614</accession>
<keyword id="KW-0903">Direct protein sequencing</keyword>
<keyword id="KW-1015">Disulfide bond</keyword>
<keyword id="KW-0325">Glycoprotein</keyword>
<keyword id="KW-0646">Protease inhibitor</keyword>
<keyword id="KW-0677">Repeat</keyword>
<keyword id="KW-0964">Secreted</keyword>
<keyword id="KW-0722">Serine protease inhibitor</keyword>
<comment type="subcellular location">
    <subcellularLocation>
        <location>Secreted</location>
    </subcellularLocation>
</comment>
<comment type="domain">
    <text>Avian ovomucoid consists of three homologous, tandem Kazal family inhibitory domains.</text>
</comment>
<reference key="1">
    <citation type="journal article" date="1987" name="Biochemistry">
        <title>Ovomucoid third domains from 100 avian species: isolation, sequences, and hypervariability of enzyme-inhibitor contact residues.</title>
        <authorList>
            <person name="Laskowski M. Jr."/>
            <person name="Kato I."/>
            <person name="Ardelt W."/>
            <person name="Cook J."/>
            <person name="Denton A."/>
            <person name="Empie M.W."/>
            <person name="Kohr W.J."/>
            <person name="Park S.J."/>
            <person name="Parks K."/>
            <person name="Schatzley B.L."/>
            <person name="Schoenberger O.L."/>
            <person name="Tashiro M."/>
            <person name="Vichot G."/>
            <person name="Whatley H.E."/>
            <person name="Wieczorek A."/>
            <person name="Wieczorek M."/>
        </authorList>
    </citation>
    <scope>PROTEIN SEQUENCE</scope>
</reference>
<sequence>IATVDCSDYPKPACSLDYMPLCGSDSKTYSNKCNFCNAVVDSNGTLTLSHFEKC</sequence>
<protein>
    <recommendedName>
        <fullName>Ovomucoid</fullName>
    </recommendedName>
</protein>